<proteinExistence type="evidence at protein level"/>
<name>TERS_LAMBD</name>
<accession>P03707</accession>
<organism>
    <name type="scientific">Escherichia phage lambda</name>
    <name type="common">Bacteriophage lambda</name>
    <dbReference type="NCBI Taxonomy" id="2681611"/>
    <lineage>
        <taxon>Viruses</taxon>
        <taxon>Duplodnaviria</taxon>
        <taxon>Heunggongvirae</taxon>
        <taxon>Uroviricota</taxon>
        <taxon>Caudoviricetes</taxon>
        <taxon>Lambdavirus</taxon>
        <taxon>Lambdavirus lambda</taxon>
    </lineage>
</organism>
<dbReference type="EC" id="3.6.4.-" evidence="11 13"/>
<dbReference type="EMBL" id="J02459">
    <property type="protein sequence ID" value="AAA96533.1"/>
    <property type="molecule type" value="Genomic_DNA"/>
</dbReference>
<dbReference type="PIR" id="C04333">
    <property type="entry name" value="JVBPNL"/>
</dbReference>
<dbReference type="RefSeq" id="NP_040580.1">
    <property type="nucleotide sequence ID" value="NC_001416.1"/>
</dbReference>
<dbReference type="PDB" id="1J9I">
    <property type="method" value="NMR"/>
    <property type="chains" value="A/B=1-68"/>
</dbReference>
<dbReference type="PDB" id="6HN7">
    <property type="method" value="X-ray"/>
    <property type="resolution" value="3.00 A"/>
    <property type="chains" value="B=1-98"/>
</dbReference>
<dbReference type="PDB" id="7LW0">
    <property type="method" value="X-ray"/>
    <property type="resolution" value="2.32 A"/>
    <property type="chains" value="A/B/C/D/E/F/G/H=1-56"/>
</dbReference>
<dbReference type="PDBsum" id="1J9I"/>
<dbReference type="PDBsum" id="6HN7"/>
<dbReference type="PDBsum" id="7LW0"/>
<dbReference type="BMRB" id="P03707"/>
<dbReference type="SMR" id="P03707"/>
<dbReference type="IntAct" id="P03707">
    <property type="interactions" value="6"/>
</dbReference>
<dbReference type="GeneID" id="2703523"/>
<dbReference type="KEGG" id="vg:2703523"/>
<dbReference type="EvolutionaryTrace" id="P03707"/>
<dbReference type="Proteomes" id="UP000001711">
    <property type="component" value="Genome"/>
</dbReference>
<dbReference type="GO" id="GO:0030430">
    <property type="term" value="C:host cell cytoplasm"/>
    <property type="evidence" value="ECO:0007669"/>
    <property type="project" value="UniProtKB-SubCell"/>
</dbReference>
<dbReference type="GO" id="GO:0097710">
    <property type="term" value="C:viral terminase, small subunit"/>
    <property type="evidence" value="ECO:0000314"/>
    <property type="project" value="UniProtKB"/>
</dbReference>
<dbReference type="GO" id="GO:0005524">
    <property type="term" value="F:ATP binding"/>
    <property type="evidence" value="ECO:0007669"/>
    <property type="project" value="UniProtKB-KW"/>
</dbReference>
<dbReference type="GO" id="GO:0016887">
    <property type="term" value="F:ATP hydrolysis activity"/>
    <property type="evidence" value="ECO:0000314"/>
    <property type="project" value="UniProtKB"/>
</dbReference>
<dbReference type="GO" id="GO:0044374">
    <property type="term" value="F:sequence-specific DNA binding, bending"/>
    <property type="evidence" value="ECO:0000314"/>
    <property type="project" value="UniProtKB"/>
</dbReference>
<dbReference type="GO" id="GO:0019073">
    <property type="term" value="P:viral DNA genome packaging"/>
    <property type="evidence" value="ECO:0000314"/>
    <property type="project" value="UniProtKB"/>
</dbReference>
<dbReference type="Gene3D" id="1.10.10.10">
    <property type="entry name" value="Winged helix-like DNA-binding domain superfamily/Winged helix DNA-binding domain"/>
    <property type="match status" value="1"/>
</dbReference>
<dbReference type="InterPro" id="IPR009061">
    <property type="entry name" value="DNA-bd_dom_put_sf"/>
</dbReference>
<dbReference type="InterPro" id="IPR010906">
    <property type="entry name" value="Phage_lambda_Nu1_terminase-ssu"/>
</dbReference>
<dbReference type="InterPro" id="IPR036388">
    <property type="entry name" value="WH-like_DNA-bd_sf"/>
</dbReference>
<dbReference type="Pfam" id="PF07471">
    <property type="entry name" value="Phage_Nu1"/>
    <property type="match status" value="1"/>
</dbReference>
<dbReference type="SUPFAM" id="SSF46955">
    <property type="entry name" value="Putative DNA-binding domain"/>
    <property type="match status" value="1"/>
</dbReference>
<organismHost>
    <name type="scientific">Escherichia coli</name>
    <dbReference type="NCBI Taxonomy" id="562"/>
</organismHost>
<comment type="function">
    <text evidence="4 6 9 14">The small subunit is responsible for the binding to multiple recognition elements within the packaging initiation site cos (PubMed:15755448, PubMed:16618107, PubMed:2989542). The terminase lies at a unique vertex of the procapsid and is composed of two subunits, a small terminase subunit involved in viral DNA recognition (binding to packaging sequence cos), and a large terminase subunit possessing endonucleolytic and ATPase activities (DNA maturation and packaging) (Probable). The terminase binds, cooperatively with the host factor IHFA/IHFB, to the cos site at the junction of adjacent viral genomes in the concatemeric DNA (PubMed:16618107). The endonuclease activity of the large subunit cleave the viral DNA generating 5'overhangs of 12 bp in length (Probable). The terminase remains bound to the left end of the genome to be packaged, forming a stable DNA-terminase complex (Probable). In a reaction facilitated by the viral assembly catalyst gpFI, the DNA-terminase complex binds to the portal of the procapsid and the terminase packages the viral DNA into the procapsid until the next cos site on the concatemer reaches the complex ('unit length' packaging) (Probable). The downstream cos site is then cut generating the mature right end of the genome, the heterotrimer undocks from the DNA-filled head and remains bound to the left end of concatemer's next genome (Probable).</text>
</comment>
<comment type="catalytic activity">
    <reaction evidence="7 11">
        <text>ATP + H2O = ADP + phosphate + H(+)</text>
        <dbReference type="Rhea" id="RHEA:13065"/>
        <dbReference type="ChEBI" id="CHEBI:15377"/>
        <dbReference type="ChEBI" id="CHEBI:15378"/>
        <dbReference type="ChEBI" id="CHEBI:30616"/>
        <dbReference type="ChEBI" id="CHEBI:43474"/>
        <dbReference type="ChEBI" id="CHEBI:456216"/>
    </reaction>
</comment>
<comment type="biophysicochemical properties">
    <kinetics>
        <KM evidence="11">469 uM for ATP</KM>
    </kinetics>
</comment>
<comment type="subunit">
    <text evidence="3 4 6 8 10">Homodimer (PubMed:12049735). Heterotrimer of two small and one large terminase subunits (PubMed:15755448). The catalytically competent terminase is composed of a tetramer of heterotrimers (PubMed:16618107, PubMed:30541105). The tetramer forms a ring structure large enough to encircle duplex DNA (PubMed:30541105). Host IHFA/IHFB induces bending of viral DNA to facilitate the assembly of the terminase tetramer of heterotrimers (PubMed:16618107). Interacts (via C-terminus) with the terminase large subunit (via N-terminus) (PubMed:2969839).</text>
</comment>
<comment type="subcellular location">
    <subcellularLocation>
        <location evidence="14">Host cytoplasm</location>
    </subcellularLocation>
    <text evidence="14">The terminase lies at a unique vertex of the procapsid during viral DNA packaging.</text>
</comment>
<comment type="domain">
    <text evidence="2 3 5 7 12 15">The N-terminus contains a winged helix-turn-helix (wHTH) that binds the viral DNA (Probable) (PubMed:12049735). In the homodimer, the wHTH motifs are positioned on opposite sites of loop and probably bind to separate R elements in the cos site (PubMed:12049735). The N-terminus also contains an ATPase site that regulates DNA binding activity (PubMed:16008350, PubMed:2965248, PubMed:9705918). The central part contains a region for the self-interaction (PubMed:10571997). the C-terminus contains region of interaction with the terminase large subunit (Probable) (PubMed:10571997).</text>
</comment>
<comment type="similarity">
    <text evidence="14">Belongs to the terminase small subunit family.</text>
</comment>
<evidence type="ECO:0000255" key="1"/>
<evidence type="ECO:0000269" key="2">
    <source>
    </source>
</evidence>
<evidence type="ECO:0000269" key="3">
    <source>
    </source>
</evidence>
<evidence type="ECO:0000269" key="4">
    <source>
    </source>
</evidence>
<evidence type="ECO:0000269" key="5">
    <source>
    </source>
</evidence>
<evidence type="ECO:0000269" key="6">
    <source>
    </source>
</evidence>
<evidence type="ECO:0000269" key="7">
    <source>
    </source>
</evidence>
<evidence type="ECO:0000269" key="8">
    <source>
    </source>
</evidence>
<evidence type="ECO:0000269" key="9">
    <source>
    </source>
</evidence>
<evidence type="ECO:0000269" key="10">
    <source>
    </source>
</evidence>
<evidence type="ECO:0000269" key="11">
    <source>
    </source>
</evidence>
<evidence type="ECO:0000269" key="12">
    <source>
    </source>
</evidence>
<evidence type="ECO:0000303" key="13">
    <source>
    </source>
</evidence>
<evidence type="ECO:0000305" key="14"/>
<evidence type="ECO:0000305" key="15">
    <source>
    </source>
</evidence>
<evidence type="ECO:0000305" key="16">
    <source>
    </source>
</evidence>
<evidence type="ECO:0007829" key="17">
    <source>
        <dbReference type="PDB" id="1J9I"/>
    </source>
</evidence>
<evidence type="ECO:0007829" key="18">
    <source>
        <dbReference type="PDB" id="7LW0"/>
    </source>
</evidence>
<gene>
    <name type="primary">Nu1</name>
    <name type="ordered locus">lambdap01</name>
</gene>
<protein>
    <recommendedName>
        <fullName>Terminase small subunit</fullName>
        <ecNumber evidence="11 13">3.6.4.-</ecNumber>
    </recommendedName>
    <alternativeName>
        <fullName>DNA-packaging protein Nu1</fullName>
    </alternativeName>
    <alternativeName>
        <fullName>Gene product Nu1</fullName>
        <shortName>gpNu1</shortName>
    </alternativeName>
</protein>
<reference key="1">
    <citation type="journal article" date="1982" name="J. Mol. Biol.">
        <title>Nucleotide sequence of bacteriophage lambda DNA.</title>
        <authorList>
            <person name="Sanger F."/>
            <person name="Coulson A.R."/>
            <person name="Hong G.F."/>
            <person name="Hill D.F."/>
            <person name="Petersen G.B."/>
        </authorList>
    </citation>
    <scope>NUCLEOTIDE SEQUENCE [LARGE SCALE GENOMIC DNA]</scope>
</reference>
<reference key="2">
    <citation type="journal article" date="1998" name="Virology">
        <title>ATP-reactive sites in the bacteriophage lambda packaging protein terminase lie in the N-termini of its subunits, gpA and gpNu1.</title>
        <authorList>
            <person name="Babbar B.K."/>
            <person name="Gold M."/>
        </authorList>
    </citation>
    <scope>PROTEIN SEQUENCE OF 1-29</scope>
    <scope>FUNCTION</scope>
    <scope>DOMAIN</scope>
</reference>
<reference key="3">
    <citation type="journal article" date="1985" name="J. Mol. Biol.">
        <title>The terminase of bacteriophage lambda. Functional domains for cosB binding and multimer assembly.</title>
        <authorList>
            <person name="Frackman S."/>
            <person name="Siegele D.A."/>
            <person name="Feiss M."/>
        </authorList>
    </citation>
    <scope>FUNCTION</scope>
    <scope>DOMAIN</scope>
</reference>
<reference key="4">
    <citation type="journal article" date="1988" name="J. Mol. Biol.">
        <title>Prediction of an ATP reactive center in the small subunit, gpNu1, of the phage lambda terminase enzyme.</title>
        <authorList>
            <person name="Becker A."/>
            <person name="Gold M."/>
        </authorList>
    </citation>
    <scope>DOMAIN</scope>
    <scope>CATALYTIC ACTIVITY</scope>
</reference>
<reference key="5">
    <citation type="journal article" date="1988" name="Genetics">
        <title>Domains for protein-protein interactions at the N and C termini of the large subunit of bacteriophage lambda terminase.</title>
        <authorList>
            <person name="Wu W.-F."/>
            <person name="Christiansen S."/>
            <person name="Feiss M."/>
        </authorList>
    </citation>
    <scope>DOMAIN</scope>
    <scope>INTERACTION WITH THE LARGE TERMINASE SUBUNIT</scope>
</reference>
<reference key="6">
    <citation type="journal article" date="1996" name="Biochemistry">
        <title>Kinetic and mutational dissection of the two ATPase activities of terminase, the DNA packaging enzyme of bacteriophage lambda.</title>
        <authorList>
            <person name="Hwang Y."/>
            <person name="Catalano C.E."/>
            <person name="Feiss M."/>
        </authorList>
    </citation>
    <scope>DOMAIN</scope>
    <scope>BIOPHYSICOCHEMICAL PROPERTIES</scope>
    <scope>MUTAGENESIS OF LYS-35</scope>
    <scope>CATALYTIC ACTIVITY</scope>
</reference>
<reference key="7">
    <citation type="journal article" date="1999" name="Biochemistry">
        <title>Domain structure of gpNu1, a phage lambda DNA packaging protein.</title>
        <authorList>
            <person name="Yang Q."/>
            <person name="Berton N."/>
            <person name="Manning M.C."/>
            <person name="Catalano C.E."/>
        </authorList>
    </citation>
    <scope>DOMAIN</scope>
</reference>
<reference key="8">
    <citation type="journal article" date="2005" name="J. Mol. Biol.">
        <title>Self-association properties of the bacteriophage lambda terminase holoenzyme: implications for the DNA packaging motor.</title>
        <authorList>
            <person name="Maluf N.K."/>
            <person name="Yang Q."/>
            <person name="Catalano C.E."/>
        </authorList>
    </citation>
    <scope>SUBUNIT</scope>
    <scope>FUNCTION</scope>
</reference>
<reference key="9">
    <citation type="journal article" date="2006" name="Biochemistry">
        <title>Bacteriophage lambda gpNu1 and Escherichia coli IHF proteins cooperatively bind and bend viral DNA: implications for the assembly of a genome-packaging motor.</title>
        <authorList>
            <person name="Ortega M.E."/>
            <person name="Catalano C.E."/>
        </authorList>
    </citation>
    <scope>FUNCTION</scope>
    <scope>SUBUNIT</scope>
</reference>
<reference key="10">
    <citation type="journal article" date="2005" name="Biochemistry">
        <title>Nucleotides regulate the conformational state of the small terminase subunit from bacteriophage lambda: implications for the assembly of a viral genome-packaging motor.</title>
        <authorList>
            <person name="Gaussier H."/>
            <person name="Ortega M.E."/>
            <person name="Maluf N.K."/>
            <person name="Catalano C.E."/>
        </authorList>
    </citation>
    <scope>DOMAIN</scope>
</reference>
<reference key="11">
    <citation type="journal article" date="2019" name="Nucleic Acids Res.">
        <title>Evidence that a catalytic glutamate and an 'Arginine Toggle' act in concert to mediate ATP hydrolysis and mechanochemical coupling in a viral DNA packaging motor.</title>
        <authorList>
            <person name="Ortiz D."/>
            <person name="delToro D."/>
            <person name="Ordyan M."/>
            <person name="Pajak J."/>
            <person name="Sippy J."/>
            <person name="Catala A."/>
            <person name="Oh C.S."/>
            <person name="Vu A."/>
            <person name="Arya G."/>
            <person name="Feiss M."/>
            <person name="Smith D.E."/>
            <person name="Catalano C.E."/>
        </authorList>
    </citation>
    <scope>SUBUNIT</scope>
</reference>
<reference key="12">
    <citation type="journal article" date="2002" name="Mol. Cell">
        <title>Insights into specific DNA recognition during the assembly of a viral genome packaging machine.</title>
        <authorList>
            <person name="de Beer T."/>
            <person name="Fang J."/>
            <person name="Ortega M."/>
            <person name="Yang Q."/>
            <person name="Maes L."/>
            <person name="Duffy C."/>
            <person name="Berton N."/>
            <person name="Sippy J."/>
            <person name="Overduin M."/>
            <person name="Feiss M."/>
            <person name="Catalano C.E."/>
        </authorList>
    </citation>
    <scope>STRUCTURE BY NMR OF 1-68</scope>
    <scope>DOMAIN</scope>
    <scope>DNA-BINDING</scope>
    <scope>SUBUNIT</scope>
</reference>
<sequence length="181" mass="20441">MEVNKKQLADIFGASIRTIQNWQEQGMPVLRGGGKGNEVLYDSAAVIKWYAERDAEIENEKLRREVEELRQASEADLQPGTIEYERHRLTRAQADAQELKNARDSAEVVETAFCTFVLSRIAGEIASILDGLPLSVQRRFPELENRHVDFLKRDIIKAMNKAAALDELIPGLLSEYIEQSG</sequence>
<keyword id="KW-0002">3D-structure</keyword>
<keyword id="KW-0067">ATP-binding</keyword>
<keyword id="KW-0175">Coiled coil</keyword>
<keyword id="KW-0903">Direct protein sequencing</keyword>
<keyword id="KW-0238">DNA-binding</keyword>
<keyword id="KW-1035">Host cytoplasm</keyword>
<keyword id="KW-0378">Hydrolase</keyword>
<keyword id="KW-0547">Nucleotide-binding</keyword>
<keyword id="KW-1185">Reference proteome</keyword>
<keyword id="KW-0231">Viral genome packaging</keyword>
<keyword id="KW-1188">Viral release from host cell</keyword>
<feature type="chain" id="PRO_0000077675" description="Terminase small subunit">
    <location>
        <begin position="1"/>
        <end position="181"/>
    </location>
</feature>
<feature type="region of interest" description="Winged helix-turn-helix (wHTH)" evidence="3 5">
    <location>
        <begin position="1"/>
        <end position="29"/>
    </location>
</feature>
<feature type="region of interest" description="Self-assembly" evidence="2">
    <location>
        <begin position="110"/>
        <end position="140"/>
    </location>
</feature>
<feature type="region of interest" description="Binding to terminase large subunit" evidence="2">
    <location>
        <begin position="141"/>
        <end position="180"/>
    </location>
</feature>
<feature type="coiled-coil region" evidence="1">
    <location>
        <begin position="52"/>
        <end position="109"/>
    </location>
</feature>
<feature type="binding site" evidence="7 16">
    <location>
        <begin position="31"/>
        <end position="36"/>
    </location>
    <ligand>
        <name>ATP</name>
        <dbReference type="ChEBI" id="CHEBI:30616"/>
    </ligand>
</feature>
<feature type="mutagenesis site" description="Decreased ATPase activity." evidence="11">
    <original>K</original>
    <variation>A</variation>
    <variation>D</variation>
    <location>
        <position position="35"/>
    </location>
</feature>
<feature type="mutagenesis site" description="No effect on ATPase activity." evidence="11">
    <original>K</original>
    <variation>R</variation>
    <location>
        <position position="35"/>
    </location>
</feature>
<feature type="strand" evidence="18">
    <location>
        <begin position="2"/>
        <end position="4"/>
    </location>
</feature>
<feature type="helix" evidence="18">
    <location>
        <begin position="5"/>
        <end position="12"/>
    </location>
</feature>
<feature type="helix" evidence="18">
    <location>
        <begin position="16"/>
        <end position="24"/>
    </location>
</feature>
<feature type="strand" evidence="18">
    <location>
        <begin position="34"/>
        <end position="36"/>
    </location>
</feature>
<feature type="strand" evidence="18">
    <location>
        <begin position="40"/>
        <end position="42"/>
    </location>
</feature>
<feature type="helix" evidence="18">
    <location>
        <begin position="43"/>
        <end position="54"/>
    </location>
</feature>
<feature type="strand" evidence="17">
    <location>
        <begin position="64"/>
        <end position="66"/>
    </location>
</feature>